<dbReference type="EC" id="7.4.2.8" evidence="1"/>
<dbReference type="EMBL" id="CP001015">
    <property type="protein sequence ID" value="ACF56047.1"/>
    <property type="molecule type" value="Genomic_DNA"/>
</dbReference>
<dbReference type="SMR" id="B5E749"/>
<dbReference type="KEGG" id="spx:SPG_1608"/>
<dbReference type="HOGENOM" id="CLU_005314_3_0_9"/>
<dbReference type="GO" id="GO:0031522">
    <property type="term" value="C:cell envelope Sec protein transport complex"/>
    <property type="evidence" value="ECO:0007669"/>
    <property type="project" value="TreeGrafter"/>
</dbReference>
<dbReference type="GO" id="GO:0005829">
    <property type="term" value="C:cytosol"/>
    <property type="evidence" value="ECO:0007669"/>
    <property type="project" value="TreeGrafter"/>
</dbReference>
<dbReference type="GO" id="GO:0005886">
    <property type="term" value="C:plasma membrane"/>
    <property type="evidence" value="ECO:0007669"/>
    <property type="project" value="UniProtKB-SubCell"/>
</dbReference>
<dbReference type="GO" id="GO:0005524">
    <property type="term" value="F:ATP binding"/>
    <property type="evidence" value="ECO:0007669"/>
    <property type="project" value="UniProtKB-UniRule"/>
</dbReference>
<dbReference type="GO" id="GO:0046872">
    <property type="term" value="F:metal ion binding"/>
    <property type="evidence" value="ECO:0007669"/>
    <property type="project" value="UniProtKB-KW"/>
</dbReference>
<dbReference type="GO" id="GO:0008564">
    <property type="term" value="F:protein-exporting ATPase activity"/>
    <property type="evidence" value="ECO:0007669"/>
    <property type="project" value="UniProtKB-EC"/>
</dbReference>
<dbReference type="GO" id="GO:0065002">
    <property type="term" value="P:intracellular protein transmembrane transport"/>
    <property type="evidence" value="ECO:0007669"/>
    <property type="project" value="UniProtKB-UniRule"/>
</dbReference>
<dbReference type="GO" id="GO:0017038">
    <property type="term" value="P:protein import"/>
    <property type="evidence" value="ECO:0007669"/>
    <property type="project" value="InterPro"/>
</dbReference>
<dbReference type="GO" id="GO:0006605">
    <property type="term" value="P:protein targeting"/>
    <property type="evidence" value="ECO:0007669"/>
    <property type="project" value="UniProtKB-UniRule"/>
</dbReference>
<dbReference type="GO" id="GO:0043952">
    <property type="term" value="P:protein transport by the Sec complex"/>
    <property type="evidence" value="ECO:0007669"/>
    <property type="project" value="TreeGrafter"/>
</dbReference>
<dbReference type="CDD" id="cd17928">
    <property type="entry name" value="DEXDc_SecA"/>
    <property type="match status" value="1"/>
</dbReference>
<dbReference type="CDD" id="cd18803">
    <property type="entry name" value="SF2_C_secA"/>
    <property type="match status" value="1"/>
</dbReference>
<dbReference type="FunFam" id="1.10.3060.10:FF:000002">
    <property type="entry name" value="Preprotein translocase subunit SecA"/>
    <property type="match status" value="1"/>
</dbReference>
<dbReference type="FunFam" id="3.40.50.300:FF:000429">
    <property type="entry name" value="Preprotein translocase subunit SecA"/>
    <property type="match status" value="1"/>
</dbReference>
<dbReference type="FunFam" id="3.90.1440.10:FF:000001">
    <property type="entry name" value="Preprotein translocase subunit SecA"/>
    <property type="match status" value="1"/>
</dbReference>
<dbReference type="Gene3D" id="1.10.3060.10">
    <property type="entry name" value="Helical scaffold and wing domains of SecA"/>
    <property type="match status" value="1"/>
</dbReference>
<dbReference type="Gene3D" id="3.40.50.300">
    <property type="entry name" value="P-loop containing nucleotide triphosphate hydrolases"/>
    <property type="match status" value="3"/>
</dbReference>
<dbReference type="Gene3D" id="3.90.1440.10">
    <property type="entry name" value="SecA, preprotein cross-linking domain"/>
    <property type="match status" value="1"/>
</dbReference>
<dbReference type="HAMAP" id="MF_01382">
    <property type="entry name" value="SecA"/>
    <property type="match status" value="1"/>
</dbReference>
<dbReference type="InterPro" id="IPR014001">
    <property type="entry name" value="Helicase_ATP-bd"/>
</dbReference>
<dbReference type="InterPro" id="IPR001650">
    <property type="entry name" value="Helicase_C-like"/>
</dbReference>
<dbReference type="InterPro" id="IPR027417">
    <property type="entry name" value="P-loop_NTPase"/>
</dbReference>
<dbReference type="InterPro" id="IPR004027">
    <property type="entry name" value="SEC_C_motif"/>
</dbReference>
<dbReference type="InterPro" id="IPR000185">
    <property type="entry name" value="SecA"/>
</dbReference>
<dbReference type="InterPro" id="IPR020937">
    <property type="entry name" value="SecA_CS"/>
</dbReference>
<dbReference type="InterPro" id="IPR011115">
    <property type="entry name" value="SecA_DEAD"/>
</dbReference>
<dbReference type="InterPro" id="IPR014018">
    <property type="entry name" value="SecA_motor_DEAD"/>
</dbReference>
<dbReference type="InterPro" id="IPR011130">
    <property type="entry name" value="SecA_preprotein_X-link_dom"/>
</dbReference>
<dbReference type="InterPro" id="IPR044722">
    <property type="entry name" value="SecA_SF2_C"/>
</dbReference>
<dbReference type="InterPro" id="IPR011116">
    <property type="entry name" value="SecA_Wing/Scaffold"/>
</dbReference>
<dbReference type="InterPro" id="IPR036266">
    <property type="entry name" value="SecA_Wing/Scaffold_sf"/>
</dbReference>
<dbReference type="InterPro" id="IPR036670">
    <property type="entry name" value="SecA_X-link_sf"/>
</dbReference>
<dbReference type="NCBIfam" id="NF006630">
    <property type="entry name" value="PRK09200.1"/>
    <property type="match status" value="1"/>
</dbReference>
<dbReference type="NCBIfam" id="TIGR00963">
    <property type="entry name" value="secA"/>
    <property type="match status" value="1"/>
</dbReference>
<dbReference type="PANTHER" id="PTHR30612:SF0">
    <property type="entry name" value="CHLOROPLAST PROTEIN-TRANSPORTING ATPASE"/>
    <property type="match status" value="1"/>
</dbReference>
<dbReference type="PANTHER" id="PTHR30612">
    <property type="entry name" value="SECA INNER MEMBRANE COMPONENT OF SEC PROTEIN SECRETION SYSTEM"/>
    <property type="match status" value="1"/>
</dbReference>
<dbReference type="Pfam" id="PF21090">
    <property type="entry name" value="P-loop_SecA"/>
    <property type="match status" value="2"/>
</dbReference>
<dbReference type="Pfam" id="PF02810">
    <property type="entry name" value="SEC-C"/>
    <property type="match status" value="1"/>
</dbReference>
<dbReference type="Pfam" id="PF07517">
    <property type="entry name" value="SecA_DEAD"/>
    <property type="match status" value="1"/>
</dbReference>
<dbReference type="Pfam" id="PF01043">
    <property type="entry name" value="SecA_PP_bind"/>
    <property type="match status" value="1"/>
</dbReference>
<dbReference type="Pfam" id="PF07516">
    <property type="entry name" value="SecA_SW"/>
    <property type="match status" value="1"/>
</dbReference>
<dbReference type="PRINTS" id="PR00906">
    <property type="entry name" value="SECA"/>
</dbReference>
<dbReference type="SMART" id="SM00957">
    <property type="entry name" value="SecA_DEAD"/>
    <property type="match status" value="1"/>
</dbReference>
<dbReference type="SMART" id="SM00958">
    <property type="entry name" value="SecA_PP_bind"/>
    <property type="match status" value="1"/>
</dbReference>
<dbReference type="SUPFAM" id="SSF81886">
    <property type="entry name" value="Helical scaffold and wing domains of SecA"/>
    <property type="match status" value="1"/>
</dbReference>
<dbReference type="SUPFAM" id="SSF52540">
    <property type="entry name" value="P-loop containing nucleoside triphosphate hydrolases"/>
    <property type="match status" value="2"/>
</dbReference>
<dbReference type="SUPFAM" id="SSF81767">
    <property type="entry name" value="Pre-protein crosslinking domain of SecA"/>
    <property type="match status" value="1"/>
</dbReference>
<dbReference type="PROSITE" id="PS01312">
    <property type="entry name" value="SECA"/>
    <property type="match status" value="1"/>
</dbReference>
<dbReference type="PROSITE" id="PS51196">
    <property type="entry name" value="SECA_MOTOR_DEAD"/>
    <property type="match status" value="1"/>
</dbReference>
<protein>
    <recommendedName>
        <fullName evidence="1">Protein translocase subunit SecA</fullName>
        <ecNumber evidence="1">7.4.2.8</ecNumber>
    </recommendedName>
</protein>
<proteinExistence type="inferred from homology"/>
<name>SECA_STRP4</name>
<accession>B5E749</accession>
<feature type="chain" id="PRO_1000145068" description="Protein translocase subunit SecA">
    <location>
        <begin position="1"/>
        <end position="837"/>
    </location>
</feature>
<feature type="binding site" evidence="1">
    <location>
        <position position="85"/>
    </location>
    <ligand>
        <name>ATP</name>
        <dbReference type="ChEBI" id="CHEBI:30616"/>
    </ligand>
</feature>
<feature type="binding site" evidence="1">
    <location>
        <begin position="103"/>
        <end position="107"/>
    </location>
    <ligand>
        <name>ATP</name>
        <dbReference type="ChEBI" id="CHEBI:30616"/>
    </ligand>
</feature>
<feature type="binding site" evidence="1">
    <location>
        <position position="493"/>
    </location>
    <ligand>
        <name>ATP</name>
        <dbReference type="ChEBI" id="CHEBI:30616"/>
    </ligand>
</feature>
<feature type="binding site" evidence="1">
    <location>
        <position position="821"/>
    </location>
    <ligand>
        <name>Zn(2+)</name>
        <dbReference type="ChEBI" id="CHEBI:29105"/>
    </ligand>
</feature>
<feature type="binding site" evidence="1">
    <location>
        <position position="823"/>
    </location>
    <ligand>
        <name>Zn(2+)</name>
        <dbReference type="ChEBI" id="CHEBI:29105"/>
    </ligand>
</feature>
<feature type="binding site" evidence="1">
    <location>
        <position position="832"/>
    </location>
    <ligand>
        <name>Zn(2+)</name>
        <dbReference type="ChEBI" id="CHEBI:29105"/>
    </ligand>
</feature>
<feature type="binding site" evidence="1">
    <location>
        <position position="833"/>
    </location>
    <ligand>
        <name>Zn(2+)</name>
        <dbReference type="ChEBI" id="CHEBI:29105"/>
    </ligand>
</feature>
<keyword id="KW-0067">ATP-binding</keyword>
<keyword id="KW-1003">Cell membrane</keyword>
<keyword id="KW-0963">Cytoplasm</keyword>
<keyword id="KW-0472">Membrane</keyword>
<keyword id="KW-0479">Metal-binding</keyword>
<keyword id="KW-0547">Nucleotide-binding</keyword>
<keyword id="KW-0653">Protein transport</keyword>
<keyword id="KW-1278">Translocase</keyword>
<keyword id="KW-0811">Translocation</keyword>
<keyword id="KW-0813">Transport</keyword>
<keyword id="KW-0862">Zinc</keyword>
<comment type="function">
    <text evidence="1">Part of the Sec protein translocase complex. Interacts with the SecYEG preprotein conducting channel. Has a central role in coupling the hydrolysis of ATP to the transfer of proteins into and across the cell membrane, serving as an ATP-driven molecular motor driving the stepwise translocation of polypeptide chains across the membrane.</text>
</comment>
<comment type="catalytic activity">
    <reaction evidence="1">
        <text>ATP + H2O + cellular proteinSide 1 = ADP + phosphate + cellular proteinSide 2.</text>
        <dbReference type="EC" id="7.4.2.8"/>
    </reaction>
</comment>
<comment type="cofactor">
    <cofactor evidence="1">
        <name>Zn(2+)</name>
        <dbReference type="ChEBI" id="CHEBI:29105"/>
    </cofactor>
    <text evidence="1">May bind 1 zinc ion per subunit.</text>
</comment>
<comment type="subunit">
    <text evidence="1">Monomer and homodimer. Part of the essential Sec protein translocation apparatus which comprises SecA, SecYEG and auxiliary proteins SecDF. Other proteins may also be involved.</text>
</comment>
<comment type="subcellular location">
    <subcellularLocation>
        <location evidence="1">Cell membrane</location>
        <topology evidence="1">Peripheral membrane protein</topology>
        <orientation evidence="1">Cytoplasmic side</orientation>
    </subcellularLocation>
    <subcellularLocation>
        <location evidence="1">Cytoplasm</location>
    </subcellularLocation>
    <text evidence="1">Distribution is 50-50.</text>
</comment>
<comment type="similarity">
    <text evidence="1">Belongs to the SecA family.</text>
</comment>
<gene>
    <name evidence="1" type="primary">secA</name>
    <name type="ordered locus">SPG_1608</name>
</gene>
<sequence>MANILKTIIENDKGEIRRLEKMADKVFKYEDQMAALTDDQLKAKTVEFKERYQNGESLDSLLYEAFAVVREGAKRVLGLFPYKVQVMGGIVLHHGDVPEMRTGEGKTLTATMPVYLNALSGKGVHVVTVNEYLSERDATEMGELYSWLGLSVGINLATKSPMEKKEAYECDITYSTNSEIGFDYLRDNMVVRAENMVQRPLNYALVDEVDSILIDEARTPLIVSGANAVETSQLYHMADHYVKSLNKDDYIIDVQSKTIGLSDSGIDRAESYFKLENLYDIENVALTHFIDNALRANYIMLLDIDYVVSEEQEILIVDQFTGRTMEGRRYSDGLHQAIEAKEGVPIQDETKTSASITYQNLFRMYKKLSGMTGTGKTEEEEFREIYNIRVIPIPTNRPVQRIDHSDLLYASIESKFKAVVEDVKARYQKGQPVLVGTVAVETSDYISKKLVAAGVPHEVLNAKNHYREAQIIMNAGQRGAVTIATNMAGRGTDIKLGEGVRELGGLCVIGTERHESRRIDNQLRGRSGRQGDPGESQFYLSLEDDLMKRFGSERLKGIFERLNMSEEAIESRMLTRQVEAAQKRVEGNNYDTRKQVLQYDDVMREQREIIYTQRYDVITADRDLAPEIQAMIKRTIGRVVDGHARAKQDEKLEAILNFAKYNLLPEDSITMEDLSGLSDKAIKEELFQRALKVYDSQVSKLRDEEAVKEFQKVLILRVVDNKWTDHIDALDQLRNAVGLRGYAQNNPVVEYQAEGFRMFNDMIGSIEFDVTRLMMKAQIHEQERPQAERHISTTATRNIAAHQASMPEDLDLSQIGRNELCPCGSGKKFKNCHGKRQ</sequence>
<evidence type="ECO:0000255" key="1">
    <source>
        <dbReference type="HAMAP-Rule" id="MF_01382"/>
    </source>
</evidence>
<organism>
    <name type="scientific">Streptococcus pneumoniae serotype 19F (strain G54)</name>
    <dbReference type="NCBI Taxonomy" id="512566"/>
    <lineage>
        <taxon>Bacteria</taxon>
        <taxon>Bacillati</taxon>
        <taxon>Bacillota</taxon>
        <taxon>Bacilli</taxon>
        <taxon>Lactobacillales</taxon>
        <taxon>Streptococcaceae</taxon>
        <taxon>Streptococcus</taxon>
    </lineage>
</organism>
<reference key="1">
    <citation type="journal article" date="2001" name="Microb. Drug Resist.">
        <title>Annotated draft genomic sequence from a Streptococcus pneumoniae type 19F clinical isolate.</title>
        <authorList>
            <person name="Dopazo J."/>
            <person name="Mendoza A."/>
            <person name="Herrero J."/>
            <person name="Caldara F."/>
            <person name="Humbert Y."/>
            <person name="Friedli L."/>
            <person name="Guerrier M."/>
            <person name="Grand-Schenk E."/>
            <person name="Gandin C."/>
            <person name="de Francesco M."/>
            <person name="Polissi A."/>
            <person name="Buell G."/>
            <person name="Feger G."/>
            <person name="Garcia E."/>
            <person name="Peitsch M."/>
            <person name="Garcia-Bustos J.F."/>
        </authorList>
    </citation>
    <scope>NUCLEOTIDE SEQUENCE [LARGE SCALE GENOMIC DNA]</scope>
    <source>
        <strain>G54</strain>
    </source>
</reference>
<reference key="2">
    <citation type="submission" date="2008-03" db="EMBL/GenBank/DDBJ databases">
        <title>Pneumococcal beta glucoside metabolism investigated by whole genome comparison.</title>
        <authorList>
            <person name="Mulas L."/>
            <person name="Trappetti C."/>
            <person name="Hakenbeck R."/>
            <person name="Iannelli F."/>
            <person name="Pozzi G."/>
            <person name="Davidsen T.M."/>
            <person name="Tettelin H."/>
            <person name="Oggioni M."/>
        </authorList>
    </citation>
    <scope>NUCLEOTIDE SEQUENCE [LARGE SCALE GENOMIC DNA]</scope>
    <source>
        <strain>G54</strain>
    </source>
</reference>